<feature type="chain" id="PRO_0000326016" description="Photosystem I assembly protein Ycf4">
    <location>
        <begin position="1"/>
        <end position="184"/>
    </location>
</feature>
<feature type="transmembrane region" description="Helical" evidence="1">
    <location>
        <begin position="22"/>
        <end position="42"/>
    </location>
</feature>
<feature type="transmembrane region" description="Helical" evidence="1">
    <location>
        <begin position="57"/>
        <end position="77"/>
    </location>
</feature>
<proteinExistence type="inferred from homology"/>
<organism>
    <name type="scientific">Lobularia maritima</name>
    <name type="common">Sweet alyssum</name>
    <name type="synonym">Alyssum maritimum</name>
    <dbReference type="NCBI Taxonomy" id="226051"/>
    <lineage>
        <taxon>Eukaryota</taxon>
        <taxon>Viridiplantae</taxon>
        <taxon>Streptophyta</taxon>
        <taxon>Embryophyta</taxon>
        <taxon>Tracheophyta</taxon>
        <taxon>Spermatophyta</taxon>
        <taxon>Magnoliopsida</taxon>
        <taxon>eudicotyledons</taxon>
        <taxon>Gunneridae</taxon>
        <taxon>Pentapetalae</taxon>
        <taxon>rosids</taxon>
        <taxon>malvids</taxon>
        <taxon>Brassicales</taxon>
        <taxon>Brassicaceae</taxon>
        <taxon>Anastaticeae</taxon>
        <taxon>Lobularia</taxon>
    </lineage>
</organism>
<gene>
    <name evidence="1" type="primary">ycf4</name>
</gene>
<comment type="function">
    <text evidence="1">Seems to be required for the assembly of the photosystem I complex.</text>
</comment>
<comment type="subcellular location">
    <subcellularLocation>
        <location evidence="1">Plastid</location>
        <location evidence="1">Chloroplast thylakoid membrane</location>
        <topology evidence="1">Multi-pass membrane protein</topology>
    </subcellularLocation>
</comment>
<comment type="similarity">
    <text evidence="1">Belongs to the Ycf4 family.</text>
</comment>
<accession>A4QLK5</accession>
<keyword id="KW-0150">Chloroplast</keyword>
<keyword id="KW-0472">Membrane</keyword>
<keyword id="KW-0602">Photosynthesis</keyword>
<keyword id="KW-0934">Plastid</keyword>
<keyword id="KW-0793">Thylakoid</keyword>
<keyword id="KW-0812">Transmembrane</keyword>
<keyword id="KW-1133">Transmembrane helix</keyword>
<name>YCF4_LOBMA</name>
<evidence type="ECO:0000255" key="1">
    <source>
        <dbReference type="HAMAP-Rule" id="MF_00437"/>
    </source>
</evidence>
<dbReference type="EMBL" id="AP009375">
    <property type="protein sequence ID" value="BAF50560.1"/>
    <property type="molecule type" value="Genomic_DNA"/>
</dbReference>
<dbReference type="RefSeq" id="YP_001123736.1">
    <property type="nucleotide sequence ID" value="NC_009274.1"/>
</dbReference>
<dbReference type="GeneID" id="4964846"/>
<dbReference type="GO" id="GO:0009535">
    <property type="term" value="C:chloroplast thylakoid membrane"/>
    <property type="evidence" value="ECO:0007669"/>
    <property type="project" value="UniProtKB-SubCell"/>
</dbReference>
<dbReference type="GO" id="GO:0009522">
    <property type="term" value="C:photosystem I"/>
    <property type="evidence" value="ECO:0007669"/>
    <property type="project" value="InterPro"/>
</dbReference>
<dbReference type="GO" id="GO:0015979">
    <property type="term" value="P:photosynthesis"/>
    <property type="evidence" value="ECO:0007669"/>
    <property type="project" value="UniProtKB-UniRule"/>
</dbReference>
<dbReference type="HAMAP" id="MF_00437">
    <property type="entry name" value="Ycf4"/>
    <property type="match status" value="1"/>
</dbReference>
<dbReference type="InterPro" id="IPR003359">
    <property type="entry name" value="PSI_Ycf4_assembly"/>
</dbReference>
<dbReference type="PANTHER" id="PTHR33288">
    <property type="match status" value="1"/>
</dbReference>
<dbReference type="PANTHER" id="PTHR33288:SF4">
    <property type="entry name" value="PHOTOSYSTEM I ASSEMBLY PROTEIN YCF4"/>
    <property type="match status" value="1"/>
</dbReference>
<dbReference type="Pfam" id="PF02392">
    <property type="entry name" value="Ycf4"/>
    <property type="match status" value="1"/>
</dbReference>
<sequence>MSWRSESIWIEFITGSRKTSNFCWAFILFLGSLGFLLVGTSSYLGRNFISLFASQQIIFFPQGIVMSFYGIAGLFISCYLWCTIFWNVGSGYDLFDRKEGIVRIFRWGFPGKSRRIFLRFLMKDIQSIRIEVKEGVSTRRVLYMEIRGQGAIPLIRADENFTTREIEQKAAELAYFLRVPIEVF</sequence>
<protein>
    <recommendedName>
        <fullName evidence="1">Photosystem I assembly protein Ycf4</fullName>
    </recommendedName>
</protein>
<reference key="1">
    <citation type="submission" date="2007-03" db="EMBL/GenBank/DDBJ databases">
        <title>Sequencing analysis of Lobularia maritima chloroplast DNA.</title>
        <authorList>
            <person name="Hosouchi T."/>
            <person name="Tsuruoka H."/>
            <person name="Kotani H."/>
        </authorList>
    </citation>
    <scope>NUCLEOTIDE SEQUENCE [LARGE SCALE GENOMIC DNA]</scope>
</reference>
<geneLocation type="chloroplast"/>